<reference key="1">
    <citation type="submission" date="2004-11" db="EMBL/GenBank/DDBJ databases">
        <authorList>
            <consortium name="The German cDNA consortium"/>
        </authorList>
    </citation>
    <scope>NUCLEOTIDE SEQUENCE [LARGE SCALE MRNA]</scope>
    <source>
        <tissue>Heart</tissue>
    </source>
</reference>
<name>RAMAC_PONAB</name>
<sequence>MTDTAEAVPNFEEMFASRFTENDKEYQEYLKRPPESPPIVEEWNSRAGGNQRNRGNRLQDNRQFRGRDNRWGWPSDNRSNQWHGRSWGNNYPQHRQEPYYPQQYGHYGYNQRPPYGYY</sequence>
<accession>Q5R9Q6</accession>
<dbReference type="EMBL" id="CR859326">
    <property type="protein sequence ID" value="CAH91504.1"/>
    <property type="molecule type" value="mRNA"/>
</dbReference>
<dbReference type="RefSeq" id="NP_001125885.1">
    <property type="nucleotide sequence ID" value="NM_001132413.1"/>
</dbReference>
<dbReference type="SMR" id="Q5R9Q6"/>
<dbReference type="FunCoup" id="Q5R9Q6">
    <property type="interactions" value="22"/>
</dbReference>
<dbReference type="STRING" id="9601.ENSPPYP00000024226"/>
<dbReference type="Ensembl" id="ENSPPYT00000007954.2">
    <property type="protein sequence ID" value="ENSPPYP00000007643.1"/>
    <property type="gene ID" value="ENSPPYG00000006736.3"/>
</dbReference>
<dbReference type="GeneID" id="100172817"/>
<dbReference type="KEGG" id="pon:100172817"/>
<dbReference type="CTD" id="83640"/>
<dbReference type="eggNOG" id="ENOG502S60Q">
    <property type="taxonomic scope" value="Eukaryota"/>
</dbReference>
<dbReference type="GeneTree" id="ENSGT00390000011190"/>
<dbReference type="HOGENOM" id="CLU_144253_0_0_1"/>
<dbReference type="InParanoid" id="Q5R9Q6"/>
<dbReference type="OMA" id="PPIIEEW"/>
<dbReference type="OrthoDB" id="5875297at2759"/>
<dbReference type="TreeFam" id="TF335880"/>
<dbReference type="Proteomes" id="UP000001595">
    <property type="component" value="Chromosome 15"/>
</dbReference>
<dbReference type="GO" id="GO:0160130">
    <property type="term" value="C:mRNA cap methyltransferase RNMT:RAMAC complex"/>
    <property type="evidence" value="ECO:0000250"/>
    <property type="project" value="UniProtKB"/>
</dbReference>
<dbReference type="GO" id="GO:0031533">
    <property type="term" value="C:mRNA capping enzyme complex"/>
    <property type="evidence" value="ECO:0000250"/>
    <property type="project" value="UniProtKB"/>
</dbReference>
<dbReference type="GO" id="GO:0005634">
    <property type="term" value="C:nucleus"/>
    <property type="evidence" value="ECO:0000250"/>
    <property type="project" value="UniProtKB"/>
</dbReference>
<dbReference type="GO" id="GO:0008047">
    <property type="term" value="F:enzyme activator activity"/>
    <property type="evidence" value="ECO:0000250"/>
    <property type="project" value="UniProtKB"/>
</dbReference>
<dbReference type="GO" id="GO:0003723">
    <property type="term" value="F:RNA binding"/>
    <property type="evidence" value="ECO:0000250"/>
    <property type="project" value="UniProtKB"/>
</dbReference>
<dbReference type="GO" id="GO:0006370">
    <property type="term" value="P:7-methylguanosine mRNA capping"/>
    <property type="evidence" value="ECO:0000250"/>
    <property type="project" value="UniProtKB"/>
</dbReference>
<dbReference type="GO" id="GO:0106005">
    <property type="term" value="P:RNA 5'-cap (guanine-N7)-methylation"/>
    <property type="evidence" value="ECO:0007669"/>
    <property type="project" value="InterPro"/>
</dbReference>
<dbReference type="InterPro" id="IPR028271">
    <property type="entry name" value="RAMAC"/>
</dbReference>
<dbReference type="PANTHER" id="PTHR48168">
    <property type="entry name" value="RNA GUANINE-7 METHYLTRANSFERASE-ACTIVATING SUBUNIT-LIKE (PSEUDOGENE)-RELATED"/>
    <property type="match status" value="1"/>
</dbReference>
<dbReference type="PANTHER" id="PTHR48168:SF1">
    <property type="entry name" value="RNA GUANINE-N7 METHYLTRANSFERASE ACTIVATING SUBUNIT-RELATED"/>
    <property type="match status" value="1"/>
</dbReference>
<dbReference type="Pfam" id="PF15320">
    <property type="entry name" value="RAM"/>
    <property type="match status" value="1"/>
</dbReference>
<proteinExistence type="inferred from homology"/>
<keyword id="KW-0007">Acetylation</keyword>
<keyword id="KW-0488">Methylation</keyword>
<keyword id="KW-0506">mRNA capping</keyword>
<keyword id="KW-0507">mRNA processing</keyword>
<keyword id="KW-0539">Nucleus</keyword>
<keyword id="KW-0597">Phosphoprotein</keyword>
<keyword id="KW-1185">Reference proteome</keyword>
<keyword id="KW-0694">RNA-binding</keyword>
<feature type="initiator methionine" description="Removed" evidence="1">
    <location>
        <position position="1"/>
    </location>
</feature>
<feature type="chain" id="PRO_0000089985" description="RNA guanine-N7 methyltransferase activating subunit">
    <location>
        <begin position="2"/>
        <end position="118"/>
    </location>
</feature>
<feature type="region of interest" description="Interaction with RNMT" evidence="1">
    <location>
        <begin position="2"/>
        <end position="55"/>
    </location>
</feature>
<feature type="region of interest" description="Disordered" evidence="2">
    <location>
        <begin position="30"/>
        <end position="118"/>
    </location>
</feature>
<feature type="region of interest" description="RNA-binding" evidence="1">
    <location>
        <begin position="56"/>
        <end position="118"/>
    </location>
</feature>
<feature type="short sequence motif" description="RNMT-activating domain" evidence="1">
    <location>
        <begin position="36"/>
        <end position="42"/>
    </location>
</feature>
<feature type="compositionally biased region" description="Low complexity" evidence="2">
    <location>
        <begin position="45"/>
        <end position="56"/>
    </location>
</feature>
<feature type="compositionally biased region" description="Basic and acidic residues" evidence="2">
    <location>
        <begin position="57"/>
        <end position="70"/>
    </location>
</feature>
<feature type="compositionally biased region" description="Polar residues" evidence="2">
    <location>
        <begin position="76"/>
        <end position="93"/>
    </location>
</feature>
<feature type="compositionally biased region" description="Low complexity" evidence="2">
    <location>
        <begin position="98"/>
        <end position="109"/>
    </location>
</feature>
<feature type="modified residue" description="N-acetylthreonine" evidence="1">
    <location>
        <position position="2"/>
    </location>
</feature>
<feature type="modified residue" description="Phosphoserine" evidence="1">
    <location>
        <position position="36"/>
    </location>
</feature>
<feature type="modified residue" description="Omega-N-methylarginine" evidence="1">
    <location>
        <position position="85"/>
    </location>
</feature>
<feature type="modified residue" description="Phosphoserine" evidence="1">
    <location>
        <position position="86"/>
    </location>
</feature>
<organism>
    <name type="scientific">Pongo abelii</name>
    <name type="common">Sumatran orangutan</name>
    <name type="synonym">Pongo pygmaeus abelii</name>
    <dbReference type="NCBI Taxonomy" id="9601"/>
    <lineage>
        <taxon>Eukaryota</taxon>
        <taxon>Metazoa</taxon>
        <taxon>Chordata</taxon>
        <taxon>Craniata</taxon>
        <taxon>Vertebrata</taxon>
        <taxon>Euteleostomi</taxon>
        <taxon>Mammalia</taxon>
        <taxon>Eutheria</taxon>
        <taxon>Euarchontoglires</taxon>
        <taxon>Primates</taxon>
        <taxon>Haplorrhini</taxon>
        <taxon>Catarrhini</taxon>
        <taxon>Hominidae</taxon>
        <taxon>Pongo</taxon>
    </lineage>
</organism>
<evidence type="ECO:0000250" key="1">
    <source>
        <dbReference type="UniProtKB" id="Q9BTL3"/>
    </source>
</evidence>
<evidence type="ECO:0000256" key="2">
    <source>
        <dbReference type="SAM" id="MobiDB-lite"/>
    </source>
</evidence>
<evidence type="ECO:0000305" key="3"/>
<protein>
    <recommendedName>
        <fullName evidence="1">RNA guanine-N7 methyltransferase activating subunit</fullName>
    </recommendedName>
    <alternativeName>
        <fullName>Protein FAM103A1</fullName>
    </alternativeName>
    <alternativeName>
        <fullName evidence="1">RNA guanine-7 methyltransferase activating subunit</fullName>
    </alternativeName>
    <alternativeName>
        <fullName evidence="1">RNMT-activating mRNA cap methylating subunit</fullName>
    </alternativeName>
    <alternativeName>
        <fullName>RNMT-activating mRNA cap methyltransferase subunit</fullName>
    </alternativeName>
    <alternativeName>
        <fullName evidence="1">RNMT-activating mini protein</fullName>
        <shortName evidence="1">RAM</shortName>
    </alternativeName>
</protein>
<gene>
    <name type="primary">RAMAC</name>
    <name type="synonym">FAM103A1</name>
    <name type="synonym">RAMMET</name>
</gene>
<comment type="function">
    <text evidence="1">Regulatory subunit of the mRNA-capping methyltransferase RNMT:RAMAC complex that methylates the N7 position of the added guanosine to the 5'-cap structure of mRNAs. Promotes the recruitment of the methyl donor, S-adenosyl-L-methionine, to RNMT. Regulates RNMT expression by a post-transcriptional stabilizing mechanism. Binds RNA.</text>
</comment>
<comment type="subunit">
    <text evidence="1">Interacts with RNMT; this interaction enhances mRNA binding and cap methyltransferase activity.</text>
</comment>
<comment type="subcellular location">
    <subcellularLocation>
        <location evidence="1">Nucleus</location>
    </subcellularLocation>
</comment>
<comment type="similarity">
    <text evidence="3">Belongs to the RAM family.</text>
</comment>